<accession>P55411</accession>
<organism>
    <name type="scientific">Sinorhizobium fredii (strain NBRC 101917 / NGR234)</name>
    <dbReference type="NCBI Taxonomy" id="394"/>
    <lineage>
        <taxon>Bacteria</taxon>
        <taxon>Pseudomonadati</taxon>
        <taxon>Pseudomonadota</taxon>
        <taxon>Alphaproteobacteria</taxon>
        <taxon>Hyphomicrobiales</taxon>
        <taxon>Rhizobiaceae</taxon>
        <taxon>Sinorhizobium/Ensifer group</taxon>
        <taxon>Sinorhizobium</taxon>
    </lineage>
</organism>
<keyword id="KW-0238">DNA-binding</keyword>
<keyword id="KW-0614">Plasmid</keyword>
<keyword id="KW-1185">Reference proteome</keyword>
<keyword id="KW-0804">Transcription</keyword>
<keyword id="KW-0805">Transcription regulation</keyword>
<feature type="chain" id="PRO_0000149777" description="Uncharacterized HTH-type transcriptional regulator y4dL">
    <location>
        <begin position="1"/>
        <end position="196"/>
    </location>
</feature>
<feature type="domain" description="HTH cro/C1-type" evidence="1">
    <location>
        <begin position="12"/>
        <end position="66"/>
    </location>
</feature>
<feature type="DNA-binding region" description="H-T-H motif" evidence="1">
    <location>
        <begin position="23"/>
        <end position="42"/>
    </location>
</feature>
<feature type="region of interest" description="Disordered" evidence="2">
    <location>
        <begin position="174"/>
        <end position="196"/>
    </location>
</feature>
<name>Y4DL_SINFN</name>
<sequence length="196" mass="21764">MAYKTEHITQQLRAAREAQKMSQRELSARSGLTQSHISQIERGTMEPGLGSLVDVARALDLEIVLAPKKLMPAIRNILDSASASSDVLTSDQRKLVGRLERWFAQHRGGFGSASEADTFKDSLALLRHLPLSAEEMDTFNEATARLDRSQADPPSRQELSRIAHAVRHLRNAAVHRDRDDAVPRSAYALDEEDDNA</sequence>
<reference key="1">
    <citation type="journal article" date="1997" name="Nature">
        <title>Molecular basis of symbiosis between Rhizobium and legumes.</title>
        <authorList>
            <person name="Freiberg C.A."/>
            <person name="Fellay R."/>
            <person name="Bairoch A."/>
            <person name="Broughton W.J."/>
            <person name="Rosenthal A."/>
            <person name="Perret X."/>
        </authorList>
    </citation>
    <scope>NUCLEOTIDE SEQUENCE [LARGE SCALE GENOMIC DNA]</scope>
    <source>
        <strain>NBRC 101917 / NGR234</strain>
    </source>
</reference>
<reference key="2">
    <citation type="journal article" date="2009" name="Appl. Environ. Microbiol.">
        <title>Rhizobium sp. strain NGR234 possesses a remarkable number of secretion systems.</title>
        <authorList>
            <person name="Schmeisser C."/>
            <person name="Liesegang H."/>
            <person name="Krysciak D."/>
            <person name="Bakkou N."/>
            <person name="Le Quere A."/>
            <person name="Wollherr A."/>
            <person name="Heinemeyer I."/>
            <person name="Morgenstern B."/>
            <person name="Pommerening-Roeser A."/>
            <person name="Flores M."/>
            <person name="Palacios R."/>
            <person name="Brenner S."/>
            <person name="Gottschalk G."/>
            <person name="Schmitz R.A."/>
            <person name="Broughton W.J."/>
            <person name="Perret X."/>
            <person name="Strittmatter A.W."/>
            <person name="Streit W.R."/>
        </authorList>
    </citation>
    <scope>NUCLEOTIDE SEQUENCE [LARGE SCALE GENOMIC DNA]</scope>
    <source>
        <strain>NBRC 101917 / NGR234</strain>
    </source>
</reference>
<gene>
    <name type="ordered locus">NGR_a04050</name>
    <name type="ORF">y4dL</name>
</gene>
<protein>
    <recommendedName>
        <fullName>Uncharacterized HTH-type transcriptional regulator y4dL</fullName>
    </recommendedName>
</protein>
<proteinExistence type="predicted"/>
<evidence type="ECO:0000255" key="1">
    <source>
        <dbReference type="PROSITE-ProRule" id="PRU00257"/>
    </source>
</evidence>
<evidence type="ECO:0000256" key="2">
    <source>
        <dbReference type="SAM" id="MobiDB-lite"/>
    </source>
</evidence>
<geneLocation type="plasmid">
    <name>sym pNGR234a</name>
</geneLocation>
<dbReference type="EMBL" id="U00090">
    <property type="protein sequence ID" value="AAB91641.1"/>
    <property type="molecule type" value="Genomic_DNA"/>
</dbReference>
<dbReference type="RefSeq" id="NP_443821.1">
    <property type="nucleotide sequence ID" value="NC_000914.2"/>
</dbReference>
<dbReference type="RefSeq" id="WP_010875416.1">
    <property type="nucleotide sequence ID" value="NC_000914.2"/>
</dbReference>
<dbReference type="SMR" id="P55411"/>
<dbReference type="KEGG" id="rhi:NGR_a04050"/>
<dbReference type="eggNOG" id="COG3620">
    <property type="taxonomic scope" value="Bacteria"/>
</dbReference>
<dbReference type="HOGENOM" id="CLU_1370950_0_0_5"/>
<dbReference type="OrthoDB" id="6386497at2"/>
<dbReference type="Proteomes" id="UP000001054">
    <property type="component" value="Plasmid pNGR234a"/>
</dbReference>
<dbReference type="GO" id="GO:0005829">
    <property type="term" value="C:cytosol"/>
    <property type="evidence" value="ECO:0007669"/>
    <property type="project" value="TreeGrafter"/>
</dbReference>
<dbReference type="GO" id="GO:0003677">
    <property type="term" value="F:DNA binding"/>
    <property type="evidence" value="ECO:0007669"/>
    <property type="project" value="UniProtKB-KW"/>
</dbReference>
<dbReference type="GO" id="GO:0003700">
    <property type="term" value="F:DNA-binding transcription factor activity"/>
    <property type="evidence" value="ECO:0007669"/>
    <property type="project" value="TreeGrafter"/>
</dbReference>
<dbReference type="CDD" id="cd00093">
    <property type="entry name" value="HTH_XRE"/>
    <property type="match status" value="1"/>
</dbReference>
<dbReference type="Gene3D" id="1.10.260.40">
    <property type="entry name" value="lambda repressor-like DNA-binding domains"/>
    <property type="match status" value="1"/>
</dbReference>
<dbReference type="InterPro" id="IPR050807">
    <property type="entry name" value="Bact_TransReg_Diox"/>
</dbReference>
<dbReference type="InterPro" id="IPR001387">
    <property type="entry name" value="Cro/C1-type_HTH"/>
</dbReference>
<dbReference type="InterPro" id="IPR010982">
    <property type="entry name" value="Lambda_DNA-bd_dom_sf"/>
</dbReference>
<dbReference type="PANTHER" id="PTHR46797">
    <property type="entry name" value="HTH-TYPE TRANSCRIPTIONAL REGULATOR"/>
    <property type="match status" value="1"/>
</dbReference>
<dbReference type="PANTHER" id="PTHR46797:SF1">
    <property type="entry name" value="METHYLPHOSPHONATE SYNTHASE"/>
    <property type="match status" value="1"/>
</dbReference>
<dbReference type="Pfam" id="PF01381">
    <property type="entry name" value="HTH_3"/>
    <property type="match status" value="1"/>
</dbReference>
<dbReference type="SMART" id="SM00530">
    <property type="entry name" value="HTH_XRE"/>
    <property type="match status" value="1"/>
</dbReference>
<dbReference type="SUPFAM" id="SSF47413">
    <property type="entry name" value="lambda repressor-like DNA-binding domains"/>
    <property type="match status" value="1"/>
</dbReference>
<dbReference type="PROSITE" id="PS50943">
    <property type="entry name" value="HTH_CROC1"/>
    <property type="match status" value="1"/>
</dbReference>